<reference key="1">
    <citation type="journal article" date="2001" name="Biochim. Biophys. Acta">
        <title>Differential expression of adipose- and heart-type fatty acid binding proteins in hibernating ground squirrels.</title>
        <authorList>
            <person name="Hittel D."/>
            <person name="Storey K.B."/>
        </authorList>
    </citation>
    <scope>NUCLEOTIDE SEQUENCE [MRNA]</scope>
    <scope>FUNCTION</scope>
    <scope>INDUCTION</scope>
</reference>
<gene>
    <name type="primary">FABP4</name>
</gene>
<dbReference type="EMBL" id="AF327855">
    <property type="protein sequence ID" value="AAK08084.1"/>
    <property type="molecule type" value="mRNA"/>
</dbReference>
<dbReference type="RefSeq" id="NP_001269191.1">
    <property type="nucleotide sequence ID" value="NM_001282262.1"/>
</dbReference>
<dbReference type="SMR" id="Q99P60"/>
<dbReference type="FunCoup" id="Q99P60">
    <property type="interactions" value="1228"/>
</dbReference>
<dbReference type="STRING" id="43179.ENSSTOP00000007662"/>
<dbReference type="Ensembl" id="ENSSTOT00000008548.3">
    <property type="protein sequence ID" value="ENSSTOP00000007662.2"/>
    <property type="gene ID" value="ENSSTOG00000008554.3"/>
</dbReference>
<dbReference type="GeneID" id="101975999"/>
<dbReference type="KEGG" id="iti:101975999"/>
<dbReference type="CTD" id="2167"/>
<dbReference type="eggNOG" id="KOG4015">
    <property type="taxonomic scope" value="Eukaryota"/>
</dbReference>
<dbReference type="GeneTree" id="ENSGT00940000160340"/>
<dbReference type="HOGENOM" id="CLU_113772_0_0_1"/>
<dbReference type="InParanoid" id="Q99P60"/>
<dbReference type="OMA" id="ECDMKGV"/>
<dbReference type="OrthoDB" id="412780at2759"/>
<dbReference type="TreeFam" id="TF316894"/>
<dbReference type="Proteomes" id="UP000005215">
    <property type="component" value="Unassembled WGS sequence"/>
</dbReference>
<dbReference type="GO" id="GO:0005737">
    <property type="term" value="C:cytoplasm"/>
    <property type="evidence" value="ECO:0000250"/>
    <property type="project" value="UniProtKB"/>
</dbReference>
<dbReference type="GO" id="GO:0005634">
    <property type="term" value="C:nucleus"/>
    <property type="evidence" value="ECO:0000250"/>
    <property type="project" value="UniProtKB"/>
</dbReference>
<dbReference type="GO" id="GO:0051427">
    <property type="term" value="F:hormone receptor binding"/>
    <property type="evidence" value="ECO:0007669"/>
    <property type="project" value="Ensembl"/>
</dbReference>
<dbReference type="GO" id="GO:0036041">
    <property type="term" value="F:long-chain fatty acid binding"/>
    <property type="evidence" value="ECO:0000250"/>
    <property type="project" value="UniProtKB"/>
</dbReference>
<dbReference type="GO" id="GO:0005324">
    <property type="term" value="F:long-chain fatty acid transmembrane transporter activity"/>
    <property type="evidence" value="ECO:0000250"/>
    <property type="project" value="UniProtKB"/>
</dbReference>
<dbReference type="GO" id="GO:0050873">
    <property type="term" value="P:brown fat cell differentiation"/>
    <property type="evidence" value="ECO:0007669"/>
    <property type="project" value="Ensembl"/>
</dbReference>
<dbReference type="GO" id="GO:0071285">
    <property type="term" value="P:cellular response to lithium ion"/>
    <property type="evidence" value="ECO:0007669"/>
    <property type="project" value="Ensembl"/>
</dbReference>
<dbReference type="GO" id="GO:0071356">
    <property type="term" value="P:cellular response to tumor necrosis factor"/>
    <property type="evidence" value="ECO:0007669"/>
    <property type="project" value="Ensembl"/>
</dbReference>
<dbReference type="GO" id="GO:0042632">
    <property type="term" value="P:cholesterol homeostasis"/>
    <property type="evidence" value="ECO:0007669"/>
    <property type="project" value="Ensembl"/>
</dbReference>
<dbReference type="GO" id="GO:0042750">
    <property type="term" value="P:hibernation"/>
    <property type="evidence" value="ECO:0007669"/>
    <property type="project" value="UniProtKB-KW"/>
</dbReference>
<dbReference type="GO" id="GO:0015909">
    <property type="term" value="P:long-chain fatty acid transport"/>
    <property type="evidence" value="ECO:0000250"/>
    <property type="project" value="UniProtKB"/>
</dbReference>
<dbReference type="GO" id="GO:0045892">
    <property type="term" value="P:negative regulation of DNA-templated transcription"/>
    <property type="evidence" value="ECO:0007669"/>
    <property type="project" value="Ensembl"/>
</dbReference>
<dbReference type="GO" id="GO:0120162">
    <property type="term" value="P:positive regulation of cold-induced thermogenesis"/>
    <property type="evidence" value="ECO:0007669"/>
    <property type="project" value="Ensembl"/>
</dbReference>
<dbReference type="GO" id="GO:0050729">
    <property type="term" value="P:positive regulation of inflammatory response"/>
    <property type="evidence" value="ECO:0007669"/>
    <property type="project" value="Ensembl"/>
</dbReference>
<dbReference type="GO" id="GO:0009617">
    <property type="term" value="P:response to bacterium"/>
    <property type="evidence" value="ECO:0007669"/>
    <property type="project" value="Ensembl"/>
</dbReference>
<dbReference type="GO" id="GO:0050872">
    <property type="term" value="P:white fat cell differentiation"/>
    <property type="evidence" value="ECO:0007669"/>
    <property type="project" value="Ensembl"/>
</dbReference>
<dbReference type="CDD" id="cd19467">
    <property type="entry name" value="FABP4"/>
    <property type="match status" value="1"/>
</dbReference>
<dbReference type="FunFam" id="2.40.128.20:FF:000001">
    <property type="entry name" value="Fatty acid-binding protein, adipocyte"/>
    <property type="match status" value="1"/>
</dbReference>
<dbReference type="Gene3D" id="2.40.128.20">
    <property type="match status" value="1"/>
</dbReference>
<dbReference type="InterPro" id="IPR012674">
    <property type="entry name" value="Calycin"/>
</dbReference>
<dbReference type="InterPro" id="IPR000463">
    <property type="entry name" value="Fatty_acid-bd"/>
</dbReference>
<dbReference type="InterPro" id="IPR031259">
    <property type="entry name" value="ILBP"/>
</dbReference>
<dbReference type="InterPro" id="IPR000566">
    <property type="entry name" value="Lipocln_cytosolic_FA-bd_dom"/>
</dbReference>
<dbReference type="PANTHER" id="PTHR11955">
    <property type="entry name" value="FATTY ACID BINDING PROTEIN"/>
    <property type="match status" value="1"/>
</dbReference>
<dbReference type="Pfam" id="PF00061">
    <property type="entry name" value="Lipocalin"/>
    <property type="match status" value="1"/>
</dbReference>
<dbReference type="PRINTS" id="PR00178">
    <property type="entry name" value="FATTYACIDBP"/>
</dbReference>
<dbReference type="SUPFAM" id="SSF50814">
    <property type="entry name" value="Lipocalins"/>
    <property type="match status" value="1"/>
</dbReference>
<dbReference type="PROSITE" id="PS00214">
    <property type="entry name" value="FABP"/>
    <property type="match status" value="1"/>
</dbReference>
<protein>
    <recommendedName>
        <fullName>Fatty acid-binding protein, adipocyte</fullName>
    </recommendedName>
    <alternativeName>
        <fullName>Adipocyte lipid-binding protein</fullName>
        <shortName>ALBP</shortName>
    </alternativeName>
    <alternativeName>
        <fullName>Adipocyte-type fatty acid-binding protein</fullName>
        <shortName>A-FABP</shortName>
        <shortName>AFABP</shortName>
    </alternativeName>
    <alternativeName>
        <fullName>Fatty acid-binding protein 4</fullName>
    </alternativeName>
</protein>
<feature type="initiator methionine" description="Removed" evidence="3">
    <location>
        <position position="1"/>
    </location>
</feature>
<feature type="chain" id="PRO_0000067370" description="Fatty acid-binding protein, adipocyte">
    <location>
        <begin position="2"/>
        <end position="132"/>
    </location>
</feature>
<feature type="short sequence motif" description="Nuclear localization signal" evidence="1">
    <location>
        <begin position="22"/>
        <end position="32"/>
    </location>
</feature>
<feature type="binding site" evidence="1">
    <location>
        <begin position="127"/>
        <end position="129"/>
    </location>
    <ligand>
        <name>a fatty acid</name>
        <dbReference type="ChEBI" id="CHEBI:28868"/>
    </ligand>
</feature>
<feature type="modified residue" description="N-acetylcysteine" evidence="3">
    <location>
        <position position="2"/>
    </location>
</feature>
<feature type="modified residue" description="Phosphoserine" evidence="2">
    <location>
        <position position="13"/>
    </location>
</feature>
<feature type="modified residue" description="Phosphotyrosine; by Tyr-kinases" evidence="1">
    <location>
        <position position="20"/>
    </location>
</feature>
<comment type="function">
    <text evidence="2">Lipid transport protein in adipocytes. Binds both long chain fatty acids and retinoic acid. Delivers long-chain fatty acids and retinoic acid to their cognate receptors in the nucleus (By similarity). FABPs are important elements related to the hibernating state in mammals (PubMed:11779641).</text>
</comment>
<comment type="subunit">
    <text evidence="2 3">Monomer (By similarity). Homodimer. Interacts with PPARG (By similarity).</text>
</comment>
<comment type="subcellular location">
    <subcellularLocation>
        <location evidence="2">Cytoplasm</location>
    </subcellularLocation>
    <subcellularLocation>
        <location evidence="2">Nucleus</location>
    </subcellularLocation>
    <text evidence="2">Depending on the nature of the ligand, a conformation change exposes a nuclear localization motif and the protein is transported into the nucleus. Subject to constitutive nuclear export.</text>
</comment>
<comment type="induction">
    <text evidence="4">Up-regulated during hibernation in brown adipose tissue.</text>
</comment>
<comment type="domain">
    <text evidence="1">Forms a beta-barrel structure that accommodates the hydrophobic ligand in its interior.</text>
</comment>
<comment type="similarity">
    <text evidence="5">Belongs to the calycin superfamily. Fatty-acid binding protein (FABP) family.</text>
</comment>
<evidence type="ECO:0000250" key="1"/>
<evidence type="ECO:0000250" key="2">
    <source>
        <dbReference type="UniProtKB" id="P04117"/>
    </source>
</evidence>
<evidence type="ECO:0000250" key="3">
    <source>
        <dbReference type="UniProtKB" id="P15090"/>
    </source>
</evidence>
<evidence type="ECO:0000269" key="4">
    <source>
    </source>
</evidence>
<evidence type="ECO:0000305" key="5"/>
<keyword id="KW-0007">Acetylation</keyword>
<keyword id="KW-0963">Cytoplasm</keyword>
<keyword id="KW-0909">Hibernation</keyword>
<keyword id="KW-0446">Lipid-binding</keyword>
<keyword id="KW-0539">Nucleus</keyword>
<keyword id="KW-0597">Phosphoprotein</keyword>
<keyword id="KW-1185">Reference proteome</keyword>
<keyword id="KW-0813">Transport</keyword>
<accession>Q99P60</accession>
<proteinExistence type="evidence at transcript level"/>
<sequence>MCDAFVGTWKLVSSENFDDYMKEVGVGFATRKVAGMAKPNMIISVNGDVITIRSESTFKNTEISFKLGQEFDEVTADDRKVKSIITLDGGVLVQVQKWDGKSTTIKRKREDDKLVVECVMKGVTSTRVYERA</sequence>
<organism>
    <name type="scientific">Ictidomys tridecemlineatus</name>
    <name type="common">Thirteen-lined ground squirrel</name>
    <name type="synonym">Spermophilus tridecemlineatus</name>
    <dbReference type="NCBI Taxonomy" id="43179"/>
    <lineage>
        <taxon>Eukaryota</taxon>
        <taxon>Metazoa</taxon>
        <taxon>Chordata</taxon>
        <taxon>Craniata</taxon>
        <taxon>Vertebrata</taxon>
        <taxon>Euteleostomi</taxon>
        <taxon>Mammalia</taxon>
        <taxon>Eutheria</taxon>
        <taxon>Euarchontoglires</taxon>
        <taxon>Glires</taxon>
        <taxon>Rodentia</taxon>
        <taxon>Sciuromorpha</taxon>
        <taxon>Sciuridae</taxon>
        <taxon>Xerinae</taxon>
        <taxon>Marmotini</taxon>
        <taxon>Ictidomys</taxon>
    </lineage>
</organism>
<name>FABP4_ICTTR</name>